<feature type="chain" id="PRO_0000225865" description="Small ribosomal subunit protein uS8">
    <location>
        <begin position="1"/>
        <end position="129"/>
    </location>
</feature>
<sequence>MMTDPIADMFTRIRNGQSAAKVAVQMPSSKVKVAIATLLKEEGYISEFSVSGEVKPELAVTLKYFEGKEVIEKIKRVSRPGLRIYKSCDELPKVLAGMGIAIISTSKGLMTDRAARSAGIGGEVLGFVE</sequence>
<name>RS8_COLP3</name>
<keyword id="KW-0687">Ribonucleoprotein</keyword>
<keyword id="KW-0689">Ribosomal protein</keyword>
<keyword id="KW-0694">RNA-binding</keyword>
<keyword id="KW-0699">rRNA-binding</keyword>
<evidence type="ECO:0000255" key="1">
    <source>
        <dbReference type="HAMAP-Rule" id="MF_01302"/>
    </source>
</evidence>
<evidence type="ECO:0000305" key="2"/>
<reference key="1">
    <citation type="journal article" date="2005" name="Proc. Natl. Acad. Sci. U.S.A.">
        <title>The psychrophilic lifestyle as revealed by the genome sequence of Colwellia psychrerythraea 34H through genomic and proteomic analyses.</title>
        <authorList>
            <person name="Methe B.A."/>
            <person name="Nelson K.E."/>
            <person name="Deming J.W."/>
            <person name="Momen B."/>
            <person name="Melamud E."/>
            <person name="Zhang X."/>
            <person name="Moult J."/>
            <person name="Madupu R."/>
            <person name="Nelson W.C."/>
            <person name="Dodson R.J."/>
            <person name="Brinkac L.M."/>
            <person name="Daugherty S.C."/>
            <person name="Durkin A.S."/>
            <person name="DeBoy R.T."/>
            <person name="Kolonay J.F."/>
            <person name="Sullivan S.A."/>
            <person name="Zhou L."/>
            <person name="Davidsen T.M."/>
            <person name="Wu M."/>
            <person name="Huston A.L."/>
            <person name="Lewis M."/>
            <person name="Weaver B."/>
            <person name="Weidman J.F."/>
            <person name="Khouri H."/>
            <person name="Utterback T.R."/>
            <person name="Feldblyum T.V."/>
            <person name="Fraser C.M."/>
        </authorList>
    </citation>
    <scope>NUCLEOTIDE SEQUENCE [LARGE SCALE GENOMIC DNA]</scope>
    <source>
        <strain>34H / ATCC BAA-681</strain>
    </source>
</reference>
<comment type="function">
    <text evidence="1">One of the primary rRNA binding proteins, it binds directly to 16S rRNA central domain where it helps coordinate assembly of the platform of the 30S subunit.</text>
</comment>
<comment type="subunit">
    <text evidence="1">Part of the 30S ribosomal subunit. Contacts proteins S5 and S12.</text>
</comment>
<comment type="similarity">
    <text evidence="1">Belongs to the universal ribosomal protein uS8 family.</text>
</comment>
<accession>Q488Z9</accession>
<protein>
    <recommendedName>
        <fullName evidence="1">Small ribosomal subunit protein uS8</fullName>
    </recommendedName>
    <alternativeName>
        <fullName evidence="2">30S ribosomal protein S8</fullName>
    </alternativeName>
</protein>
<proteinExistence type="inferred from homology"/>
<gene>
    <name evidence="1" type="primary">rpsH</name>
    <name type="ordered locus">CPS_0615</name>
</gene>
<dbReference type="EMBL" id="CP000083">
    <property type="protein sequence ID" value="AAZ28152.1"/>
    <property type="molecule type" value="Genomic_DNA"/>
</dbReference>
<dbReference type="SMR" id="Q488Z9"/>
<dbReference type="STRING" id="167879.CPS_0615"/>
<dbReference type="KEGG" id="cps:CPS_0615"/>
<dbReference type="eggNOG" id="COG0096">
    <property type="taxonomic scope" value="Bacteria"/>
</dbReference>
<dbReference type="HOGENOM" id="CLU_098428_0_0_6"/>
<dbReference type="Proteomes" id="UP000000547">
    <property type="component" value="Chromosome"/>
</dbReference>
<dbReference type="GO" id="GO:1990904">
    <property type="term" value="C:ribonucleoprotein complex"/>
    <property type="evidence" value="ECO:0007669"/>
    <property type="project" value="UniProtKB-KW"/>
</dbReference>
<dbReference type="GO" id="GO:0005840">
    <property type="term" value="C:ribosome"/>
    <property type="evidence" value="ECO:0007669"/>
    <property type="project" value="UniProtKB-KW"/>
</dbReference>
<dbReference type="GO" id="GO:0019843">
    <property type="term" value="F:rRNA binding"/>
    <property type="evidence" value="ECO:0007669"/>
    <property type="project" value="UniProtKB-UniRule"/>
</dbReference>
<dbReference type="GO" id="GO:0003735">
    <property type="term" value="F:structural constituent of ribosome"/>
    <property type="evidence" value="ECO:0007669"/>
    <property type="project" value="InterPro"/>
</dbReference>
<dbReference type="GO" id="GO:0006412">
    <property type="term" value="P:translation"/>
    <property type="evidence" value="ECO:0007669"/>
    <property type="project" value="UniProtKB-UniRule"/>
</dbReference>
<dbReference type="FunFam" id="3.30.1370.30:FF:000003">
    <property type="entry name" value="30S ribosomal protein S8"/>
    <property type="match status" value="1"/>
</dbReference>
<dbReference type="FunFam" id="3.30.1490.10:FF:000001">
    <property type="entry name" value="30S ribosomal protein S8"/>
    <property type="match status" value="1"/>
</dbReference>
<dbReference type="Gene3D" id="3.30.1370.30">
    <property type="match status" value="1"/>
</dbReference>
<dbReference type="Gene3D" id="3.30.1490.10">
    <property type="match status" value="1"/>
</dbReference>
<dbReference type="HAMAP" id="MF_01302_B">
    <property type="entry name" value="Ribosomal_uS8_B"/>
    <property type="match status" value="1"/>
</dbReference>
<dbReference type="InterPro" id="IPR000630">
    <property type="entry name" value="Ribosomal_uS8"/>
</dbReference>
<dbReference type="InterPro" id="IPR047863">
    <property type="entry name" value="Ribosomal_uS8_CS"/>
</dbReference>
<dbReference type="InterPro" id="IPR035987">
    <property type="entry name" value="Ribosomal_uS8_sf"/>
</dbReference>
<dbReference type="NCBIfam" id="NF001109">
    <property type="entry name" value="PRK00136.1"/>
    <property type="match status" value="1"/>
</dbReference>
<dbReference type="PANTHER" id="PTHR11758">
    <property type="entry name" value="40S RIBOSOMAL PROTEIN S15A"/>
    <property type="match status" value="1"/>
</dbReference>
<dbReference type="Pfam" id="PF00410">
    <property type="entry name" value="Ribosomal_S8"/>
    <property type="match status" value="1"/>
</dbReference>
<dbReference type="SUPFAM" id="SSF56047">
    <property type="entry name" value="Ribosomal protein S8"/>
    <property type="match status" value="1"/>
</dbReference>
<dbReference type="PROSITE" id="PS00053">
    <property type="entry name" value="RIBOSOMAL_S8"/>
    <property type="match status" value="1"/>
</dbReference>
<organism>
    <name type="scientific">Colwellia psychrerythraea (strain 34H / ATCC BAA-681)</name>
    <name type="common">Vibrio psychroerythus</name>
    <dbReference type="NCBI Taxonomy" id="167879"/>
    <lineage>
        <taxon>Bacteria</taxon>
        <taxon>Pseudomonadati</taxon>
        <taxon>Pseudomonadota</taxon>
        <taxon>Gammaproteobacteria</taxon>
        <taxon>Alteromonadales</taxon>
        <taxon>Colwelliaceae</taxon>
        <taxon>Colwellia</taxon>
    </lineage>
</organism>